<reference key="1">
    <citation type="journal article" date="2002" name="Genome Res.">
        <title>A complete sequence of the T. tengcongensis genome.</title>
        <authorList>
            <person name="Bao Q."/>
            <person name="Tian Y."/>
            <person name="Li W."/>
            <person name="Xu Z."/>
            <person name="Xuan Z."/>
            <person name="Hu S."/>
            <person name="Dong W."/>
            <person name="Yang J."/>
            <person name="Chen Y."/>
            <person name="Xue Y."/>
            <person name="Xu Y."/>
            <person name="Lai X."/>
            <person name="Huang L."/>
            <person name="Dong X."/>
            <person name="Ma Y."/>
            <person name="Ling L."/>
            <person name="Tan H."/>
            <person name="Chen R."/>
            <person name="Wang J."/>
            <person name="Yu J."/>
            <person name="Yang H."/>
        </authorList>
    </citation>
    <scope>NUCLEOTIDE SEQUENCE [LARGE SCALE GENOMIC DNA]</scope>
    <source>
        <strain>DSM 15242 / JCM 11007 / NBRC 100824 / MB4</strain>
    </source>
</reference>
<evidence type="ECO:0000255" key="1">
    <source>
        <dbReference type="HAMAP-Rule" id="MF_01250"/>
    </source>
</evidence>
<evidence type="ECO:0000305" key="2"/>
<protein>
    <recommendedName>
        <fullName evidence="1">Putative pyrophosphatase PpaX</fullName>
        <ecNumber evidence="1">3.6.1.1</ecNumber>
    </recommendedName>
</protein>
<organism>
    <name type="scientific">Caldanaerobacter subterraneus subsp. tengcongensis (strain DSM 15242 / JCM 11007 / NBRC 100824 / MB4)</name>
    <name type="common">Thermoanaerobacter tengcongensis</name>
    <dbReference type="NCBI Taxonomy" id="273068"/>
    <lineage>
        <taxon>Bacteria</taxon>
        <taxon>Bacillati</taxon>
        <taxon>Bacillota</taxon>
        <taxon>Clostridia</taxon>
        <taxon>Thermoanaerobacterales</taxon>
        <taxon>Thermoanaerobacteraceae</taxon>
        <taxon>Caldanaerobacter</taxon>
    </lineage>
</organism>
<feature type="chain" id="PRO_0000056845" description="Putative pyrophosphatase PpaX">
    <location>
        <begin position="1"/>
        <end position="220"/>
    </location>
</feature>
<feature type="active site" description="Nucleophile" evidence="1">
    <location>
        <position position="9"/>
    </location>
</feature>
<comment type="catalytic activity">
    <reaction evidence="1">
        <text>diphosphate + H2O = 2 phosphate + H(+)</text>
        <dbReference type="Rhea" id="RHEA:24576"/>
        <dbReference type="ChEBI" id="CHEBI:15377"/>
        <dbReference type="ChEBI" id="CHEBI:15378"/>
        <dbReference type="ChEBI" id="CHEBI:33019"/>
        <dbReference type="ChEBI" id="CHEBI:43474"/>
        <dbReference type="EC" id="3.6.1.1"/>
    </reaction>
</comment>
<comment type="cofactor">
    <cofactor evidence="1">
        <name>Mg(2+)</name>
        <dbReference type="ChEBI" id="CHEBI:18420"/>
    </cofactor>
</comment>
<comment type="similarity">
    <text evidence="1">Belongs to the HAD-like hydrolase superfamily. PpaX family.</text>
</comment>
<comment type="sequence caution" evidence="2">
    <conflict type="erroneous initiation">
        <sequence resource="EMBL-CDS" id="AAM25368"/>
    </conflict>
</comment>
<name>PPAX_CALS4</name>
<dbReference type="EC" id="3.6.1.1" evidence="1"/>
<dbReference type="EMBL" id="AE008691">
    <property type="protein sequence ID" value="AAM25368.1"/>
    <property type="status" value="ALT_INIT"/>
    <property type="molecule type" value="Genomic_DNA"/>
</dbReference>
<dbReference type="RefSeq" id="WP_041587361.1">
    <property type="nucleotide sequence ID" value="NC_003869.1"/>
</dbReference>
<dbReference type="SMR" id="Q8R821"/>
<dbReference type="STRING" id="273068.TTE2216"/>
<dbReference type="KEGG" id="tte:TTE2216"/>
<dbReference type="eggNOG" id="COG0546">
    <property type="taxonomic scope" value="Bacteria"/>
</dbReference>
<dbReference type="HOGENOM" id="CLU_045011_19_3_9"/>
<dbReference type="Proteomes" id="UP000000555">
    <property type="component" value="Chromosome"/>
</dbReference>
<dbReference type="GO" id="GO:0005829">
    <property type="term" value="C:cytosol"/>
    <property type="evidence" value="ECO:0007669"/>
    <property type="project" value="TreeGrafter"/>
</dbReference>
<dbReference type="GO" id="GO:0004427">
    <property type="term" value="F:inorganic diphosphate phosphatase activity"/>
    <property type="evidence" value="ECO:0007669"/>
    <property type="project" value="UniProtKB-UniRule"/>
</dbReference>
<dbReference type="GO" id="GO:0000287">
    <property type="term" value="F:magnesium ion binding"/>
    <property type="evidence" value="ECO:0007669"/>
    <property type="project" value="UniProtKB-UniRule"/>
</dbReference>
<dbReference type="GO" id="GO:0008967">
    <property type="term" value="F:phosphoglycolate phosphatase activity"/>
    <property type="evidence" value="ECO:0007669"/>
    <property type="project" value="TreeGrafter"/>
</dbReference>
<dbReference type="GO" id="GO:0006281">
    <property type="term" value="P:DNA repair"/>
    <property type="evidence" value="ECO:0007669"/>
    <property type="project" value="TreeGrafter"/>
</dbReference>
<dbReference type="CDD" id="cd02616">
    <property type="entry name" value="HAD_PPase"/>
    <property type="match status" value="1"/>
</dbReference>
<dbReference type="FunFam" id="3.40.50.1000:FF:000022">
    <property type="entry name" value="Phosphoglycolate phosphatase"/>
    <property type="match status" value="1"/>
</dbReference>
<dbReference type="Gene3D" id="3.40.50.1000">
    <property type="entry name" value="HAD superfamily/HAD-like"/>
    <property type="match status" value="1"/>
</dbReference>
<dbReference type="Gene3D" id="1.10.150.240">
    <property type="entry name" value="Putative phosphatase, domain 2"/>
    <property type="match status" value="1"/>
</dbReference>
<dbReference type="HAMAP" id="MF_01250">
    <property type="entry name" value="Pyrophosphat_PpaX"/>
    <property type="match status" value="1"/>
</dbReference>
<dbReference type="InterPro" id="IPR050155">
    <property type="entry name" value="HAD-like_hydrolase_sf"/>
</dbReference>
<dbReference type="InterPro" id="IPR036412">
    <property type="entry name" value="HAD-like_sf"/>
</dbReference>
<dbReference type="InterPro" id="IPR006439">
    <property type="entry name" value="HAD-SF_hydro_IA"/>
</dbReference>
<dbReference type="InterPro" id="IPR041492">
    <property type="entry name" value="HAD_2"/>
</dbReference>
<dbReference type="InterPro" id="IPR023214">
    <property type="entry name" value="HAD_sf"/>
</dbReference>
<dbReference type="InterPro" id="IPR023198">
    <property type="entry name" value="PGP-like_dom2"/>
</dbReference>
<dbReference type="InterPro" id="IPR023733">
    <property type="entry name" value="Pyrophosphatase_Ppax"/>
</dbReference>
<dbReference type="NCBIfam" id="TIGR01549">
    <property type="entry name" value="HAD-SF-IA-v1"/>
    <property type="match status" value="1"/>
</dbReference>
<dbReference type="NCBIfam" id="TIGR01509">
    <property type="entry name" value="HAD-SF-IA-v3"/>
    <property type="match status" value="1"/>
</dbReference>
<dbReference type="NCBIfam" id="NF009804">
    <property type="entry name" value="PRK13288.1"/>
    <property type="match status" value="1"/>
</dbReference>
<dbReference type="PANTHER" id="PTHR43434">
    <property type="entry name" value="PHOSPHOGLYCOLATE PHOSPHATASE"/>
    <property type="match status" value="1"/>
</dbReference>
<dbReference type="PANTHER" id="PTHR43434:SF26">
    <property type="entry name" value="PYROPHOSPHATASE PPAX"/>
    <property type="match status" value="1"/>
</dbReference>
<dbReference type="Pfam" id="PF13419">
    <property type="entry name" value="HAD_2"/>
    <property type="match status" value="1"/>
</dbReference>
<dbReference type="SFLD" id="SFLDG01135">
    <property type="entry name" value="C1.5.6:_HAD__Beta-PGM__Phospha"/>
    <property type="match status" value="1"/>
</dbReference>
<dbReference type="SFLD" id="SFLDG01129">
    <property type="entry name" value="C1.5:_HAD__Beta-PGM__Phosphata"/>
    <property type="match status" value="1"/>
</dbReference>
<dbReference type="SUPFAM" id="SSF56784">
    <property type="entry name" value="HAD-like"/>
    <property type="match status" value="1"/>
</dbReference>
<sequence>MKITAVLFDLDGTIIDTNQLIIKSFVYTVEKHLGYKIGAEEVIPYFGEPLPLTLQRFSKDKWEIMLKTYRDYNEKYHDRYTKIREDVKEVLARLKEEGIKTAVVTSKRRELAKRGLKLFELDKYFDVLVGLEDTEKHKPEPDPVLKALELLKSPREEALMVGDSPYDILSARSAGVRSVAVKWSVLPFELLKKEKPDYFIEDMWQLLKIIKGCDEDEHEQ</sequence>
<keyword id="KW-0378">Hydrolase</keyword>
<keyword id="KW-0460">Magnesium</keyword>
<keyword id="KW-1185">Reference proteome</keyword>
<accession>Q8R821</accession>
<gene>
    <name evidence="1" type="primary">ppaX</name>
    <name type="ordered locus">TTE2216</name>
</gene>
<proteinExistence type="inferred from homology"/>